<accession>Q12L24</accession>
<keyword id="KW-0067">ATP-binding</keyword>
<keyword id="KW-0963">Cytoplasm</keyword>
<keyword id="KW-0418">Kinase</keyword>
<keyword id="KW-0520">NAD</keyword>
<keyword id="KW-0521">NADP</keyword>
<keyword id="KW-0547">Nucleotide-binding</keyword>
<keyword id="KW-1185">Reference proteome</keyword>
<keyword id="KW-0808">Transferase</keyword>
<reference key="1">
    <citation type="submission" date="2006-03" db="EMBL/GenBank/DDBJ databases">
        <title>Complete sequence of Shewanella denitrificans OS217.</title>
        <authorList>
            <consortium name="US DOE Joint Genome Institute"/>
            <person name="Copeland A."/>
            <person name="Lucas S."/>
            <person name="Lapidus A."/>
            <person name="Barry K."/>
            <person name="Detter J.C."/>
            <person name="Glavina del Rio T."/>
            <person name="Hammon N."/>
            <person name="Israni S."/>
            <person name="Dalin E."/>
            <person name="Tice H."/>
            <person name="Pitluck S."/>
            <person name="Brettin T."/>
            <person name="Bruce D."/>
            <person name="Han C."/>
            <person name="Tapia R."/>
            <person name="Gilna P."/>
            <person name="Kiss H."/>
            <person name="Schmutz J."/>
            <person name="Larimer F."/>
            <person name="Land M."/>
            <person name="Hauser L."/>
            <person name="Kyrpides N."/>
            <person name="Lykidis A."/>
            <person name="Richardson P."/>
        </authorList>
    </citation>
    <scope>NUCLEOTIDE SEQUENCE [LARGE SCALE GENOMIC DNA]</scope>
    <source>
        <strain>OS217 / ATCC BAA-1090 / DSM 15013</strain>
    </source>
</reference>
<feature type="chain" id="PRO_1000079512" description="NAD kinase">
    <location>
        <begin position="1"/>
        <end position="309"/>
    </location>
</feature>
<feature type="active site" description="Proton acceptor" evidence="1">
    <location>
        <position position="89"/>
    </location>
</feature>
<feature type="binding site" evidence="1">
    <location>
        <begin position="89"/>
        <end position="90"/>
    </location>
    <ligand>
        <name>NAD(+)</name>
        <dbReference type="ChEBI" id="CHEBI:57540"/>
    </ligand>
</feature>
<feature type="binding site" evidence="1">
    <location>
        <begin position="163"/>
        <end position="164"/>
    </location>
    <ligand>
        <name>NAD(+)</name>
        <dbReference type="ChEBI" id="CHEBI:57540"/>
    </ligand>
</feature>
<feature type="binding site" evidence="1">
    <location>
        <position position="174"/>
    </location>
    <ligand>
        <name>NAD(+)</name>
        <dbReference type="ChEBI" id="CHEBI:57540"/>
    </ligand>
</feature>
<feature type="binding site" evidence="1">
    <location>
        <position position="191"/>
    </location>
    <ligand>
        <name>NAD(+)</name>
        <dbReference type="ChEBI" id="CHEBI:57540"/>
    </ligand>
</feature>
<feature type="binding site" evidence="1">
    <location>
        <position position="193"/>
    </location>
    <ligand>
        <name>NAD(+)</name>
        <dbReference type="ChEBI" id="CHEBI:57540"/>
    </ligand>
</feature>
<feature type="binding site" evidence="1">
    <location>
        <begin position="204"/>
        <end position="209"/>
    </location>
    <ligand>
        <name>NAD(+)</name>
        <dbReference type="ChEBI" id="CHEBI:57540"/>
    </ligand>
</feature>
<organism>
    <name type="scientific">Shewanella denitrificans (strain OS217 / ATCC BAA-1090 / DSM 15013)</name>
    <dbReference type="NCBI Taxonomy" id="318161"/>
    <lineage>
        <taxon>Bacteria</taxon>
        <taxon>Pseudomonadati</taxon>
        <taxon>Pseudomonadota</taxon>
        <taxon>Gammaproteobacteria</taxon>
        <taxon>Alteromonadales</taxon>
        <taxon>Shewanellaceae</taxon>
        <taxon>Shewanella</taxon>
    </lineage>
</organism>
<gene>
    <name evidence="1" type="primary">nadK</name>
    <name type="ordered locus">Sden_2573</name>
</gene>
<evidence type="ECO:0000255" key="1">
    <source>
        <dbReference type="HAMAP-Rule" id="MF_00361"/>
    </source>
</evidence>
<proteinExistence type="inferred from homology"/>
<comment type="function">
    <text evidence="1">Involved in the regulation of the intracellular balance of NAD and NADP, and is a key enzyme in the biosynthesis of NADP. Catalyzes specifically the phosphorylation on 2'-hydroxyl of the adenosine moiety of NAD to yield NADP.</text>
</comment>
<comment type="catalytic activity">
    <reaction evidence="1">
        <text>NAD(+) + ATP = ADP + NADP(+) + H(+)</text>
        <dbReference type="Rhea" id="RHEA:18629"/>
        <dbReference type="ChEBI" id="CHEBI:15378"/>
        <dbReference type="ChEBI" id="CHEBI:30616"/>
        <dbReference type="ChEBI" id="CHEBI:57540"/>
        <dbReference type="ChEBI" id="CHEBI:58349"/>
        <dbReference type="ChEBI" id="CHEBI:456216"/>
        <dbReference type="EC" id="2.7.1.23"/>
    </reaction>
</comment>
<comment type="cofactor">
    <cofactor evidence="1">
        <name>a divalent metal cation</name>
        <dbReference type="ChEBI" id="CHEBI:60240"/>
    </cofactor>
</comment>
<comment type="subcellular location">
    <subcellularLocation>
        <location evidence="1">Cytoplasm</location>
    </subcellularLocation>
</comment>
<comment type="similarity">
    <text evidence="1">Belongs to the NAD kinase family.</text>
</comment>
<sequence>MGINSDVSRPRARSTPNMSKKFQTIGLIGKPHHQGTNQTIEKLHLWLTAQGYTVLVEERVSAELEIEFQAVDLVEIGERCDLAIVVGGDGNMLGAARVLARYDVAVIGVNRGNLGFLTDLPPDGFETQLAQVLGGEFETEHRFLLEAEVHRHGMIKASNTAVNEAVLHPGKIAHMIQFEVYIDEQFMYSQRADGMIVSTPTGSTAYSLSAGGAILTPNLQALILVPMFPHTLSCRPIVVDACSTIKLVVSPDNGENLEVSCDGHVHLSVLPGDEIIIRRSQQRLMLIHPKGHNYFHVLRNKLGWGSKLF</sequence>
<protein>
    <recommendedName>
        <fullName evidence="1">NAD kinase</fullName>
        <ecNumber evidence="1">2.7.1.23</ecNumber>
    </recommendedName>
    <alternativeName>
        <fullName evidence="1">ATP-dependent NAD kinase</fullName>
    </alternativeName>
</protein>
<dbReference type="EC" id="2.7.1.23" evidence="1"/>
<dbReference type="EMBL" id="CP000302">
    <property type="protein sequence ID" value="ABE55852.1"/>
    <property type="molecule type" value="Genomic_DNA"/>
</dbReference>
<dbReference type="SMR" id="Q12L24"/>
<dbReference type="STRING" id="318161.Sden_2573"/>
<dbReference type="KEGG" id="sdn:Sden_2573"/>
<dbReference type="eggNOG" id="COG0061">
    <property type="taxonomic scope" value="Bacteria"/>
</dbReference>
<dbReference type="HOGENOM" id="CLU_008831_0_1_6"/>
<dbReference type="Proteomes" id="UP000001982">
    <property type="component" value="Chromosome"/>
</dbReference>
<dbReference type="GO" id="GO:0005737">
    <property type="term" value="C:cytoplasm"/>
    <property type="evidence" value="ECO:0007669"/>
    <property type="project" value="UniProtKB-SubCell"/>
</dbReference>
<dbReference type="GO" id="GO:0005524">
    <property type="term" value="F:ATP binding"/>
    <property type="evidence" value="ECO:0007669"/>
    <property type="project" value="UniProtKB-KW"/>
</dbReference>
<dbReference type="GO" id="GO:0046872">
    <property type="term" value="F:metal ion binding"/>
    <property type="evidence" value="ECO:0007669"/>
    <property type="project" value="UniProtKB-UniRule"/>
</dbReference>
<dbReference type="GO" id="GO:0051287">
    <property type="term" value="F:NAD binding"/>
    <property type="evidence" value="ECO:0007669"/>
    <property type="project" value="UniProtKB-ARBA"/>
</dbReference>
<dbReference type="GO" id="GO:0003951">
    <property type="term" value="F:NAD+ kinase activity"/>
    <property type="evidence" value="ECO:0007669"/>
    <property type="project" value="UniProtKB-UniRule"/>
</dbReference>
<dbReference type="GO" id="GO:0019674">
    <property type="term" value="P:NAD metabolic process"/>
    <property type="evidence" value="ECO:0007669"/>
    <property type="project" value="InterPro"/>
</dbReference>
<dbReference type="GO" id="GO:0006741">
    <property type="term" value="P:NADP biosynthetic process"/>
    <property type="evidence" value="ECO:0007669"/>
    <property type="project" value="UniProtKB-UniRule"/>
</dbReference>
<dbReference type="FunFam" id="2.60.200.30:FF:000001">
    <property type="entry name" value="NAD kinase"/>
    <property type="match status" value="1"/>
</dbReference>
<dbReference type="Gene3D" id="3.40.50.10330">
    <property type="entry name" value="Probable inorganic polyphosphate/atp-NAD kinase, domain 1"/>
    <property type="match status" value="1"/>
</dbReference>
<dbReference type="Gene3D" id="2.60.200.30">
    <property type="entry name" value="Probable inorganic polyphosphate/atp-NAD kinase, domain 2"/>
    <property type="match status" value="1"/>
</dbReference>
<dbReference type="HAMAP" id="MF_00361">
    <property type="entry name" value="NAD_kinase"/>
    <property type="match status" value="1"/>
</dbReference>
<dbReference type="InterPro" id="IPR017438">
    <property type="entry name" value="ATP-NAD_kinase_N"/>
</dbReference>
<dbReference type="InterPro" id="IPR017437">
    <property type="entry name" value="ATP-NAD_kinase_PpnK-typ_C"/>
</dbReference>
<dbReference type="InterPro" id="IPR016064">
    <property type="entry name" value="NAD/diacylglycerol_kinase_sf"/>
</dbReference>
<dbReference type="InterPro" id="IPR002504">
    <property type="entry name" value="NADK"/>
</dbReference>
<dbReference type="NCBIfam" id="NF002306">
    <property type="entry name" value="PRK01231.1"/>
    <property type="match status" value="1"/>
</dbReference>
<dbReference type="NCBIfam" id="NF002893">
    <property type="entry name" value="PRK03378.1"/>
    <property type="match status" value="1"/>
</dbReference>
<dbReference type="PANTHER" id="PTHR20275">
    <property type="entry name" value="NAD KINASE"/>
    <property type="match status" value="1"/>
</dbReference>
<dbReference type="PANTHER" id="PTHR20275:SF0">
    <property type="entry name" value="NAD KINASE"/>
    <property type="match status" value="1"/>
</dbReference>
<dbReference type="Pfam" id="PF01513">
    <property type="entry name" value="NAD_kinase"/>
    <property type="match status" value="1"/>
</dbReference>
<dbReference type="Pfam" id="PF20143">
    <property type="entry name" value="NAD_kinase_C"/>
    <property type="match status" value="1"/>
</dbReference>
<dbReference type="SUPFAM" id="SSF111331">
    <property type="entry name" value="NAD kinase/diacylglycerol kinase-like"/>
    <property type="match status" value="1"/>
</dbReference>
<name>NADK_SHEDO</name>